<evidence type="ECO:0000255" key="1">
    <source>
        <dbReference type="HAMAP-Rule" id="MF_01589"/>
    </source>
</evidence>
<comment type="function">
    <text evidence="1">Catalyzes the conversion of S-adenosyl-L-methionine (SAM) to carboxy-S-adenosyl-L-methionine (Cx-SAM).</text>
</comment>
<comment type="catalytic activity">
    <reaction evidence="1">
        <text>prephenate + S-adenosyl-L-methionine = carboxy-S-adenosyl-L-methionine + 3-phenylpyruvate + H2O</text>
        <dbReference type="Rhea" id="RHEA:51692"/>
        <dbReference type="ChEBI" id="CHEBI:15377"/>
        <dbReference type="ChEBI" id="CHEBI:18005"/>
        <dbReference type="ChEBI" id="CHEBI:29934"/>
        <dbReference type="ChEBI" id="CHEBI:59789"/>
        <dbReference type="ChEBI" id="CHEBI:134278"/>
    </reaction>
</comment>
<comment type="subunit">
    <text evidence="1">Homodimer.</text>
</comment>
<comment type="similarity">
    <text evidence="1">Belongs to the class I-like SAM-binding methyltransferase superfamily. Cx-SAM synthase family.</text>
</comment>
<feature type="chain" id="PRO_1000087966" description="Carboxy-S-adenosyl-L-methionine synthase">
    <location>
        <begin position="1"/>
        <end position="243"/>
    </location>
</feature>
<feature type="binding site" evidence="1">
    <location>
        <position position="40"/>
    </location>
    <ligand>
        <name>S-adenosyl-L-methionine</name>
        <dbReference type="ChEBI" id="CHEBI:59789"/>
    </ligand>
</feature>
<feature type="binding site" evidence="1">
    <location>
        <begin position="65"/>
        <end position="67"/>
    </location>
    <ligand>
        <name>S-adenosyl-L-methionine</name>
        <dbReference type="ChEBI" id="CHEBI:59789"/>
    </ligand>
</feature>
<feature type="binding site" evidence="1">
    <location>
        <begin position="90"/>
        <end position="91"/>
    </location>
    <ligand>
        <name>S-adenosyl-L-methionine</name>
        <dbReference type="ChEBI" id="CHEBI:59789"/>
    </ligand>
</feature>
<feature type="binding site" evidence="1">
    <location>
        <begin position="118"/>
        <end position="119"/>
    </location>
    <ligand>
        <name>S-adenosyl-L-methionine</name>
        <dbReference type="ChEBI" id="CHEBI:59789"/>
    </ligand>
</feature>
<feature type="binding site" evidence="1">
    <location>
        <position position="133"/>
    </location>
    <ligand>
        <name>S-adenosyl-L-methionine</name>
        <dbReference type="ChEBI" id="CHEBI:59789"/>
    </ligand>
</feature>
<feature type="binding site" evidence="1">
    <location>
        <position position="200"/>
    </location>
    <ligand>
        <name>S-adenosyl-L-methionine</name>
        <dbReference type="ChEBI" id="CHEBI:59789"/>
    </ligand>
</feature>
<accession>A8FUW4</accession>
<keyword id="KW-1185">Reference proteome</keyword>
<keyword id="KW-0949">S-adenosyl-L-methionine</keyword>
<keyword id="KW-0808">Transferase</keyword>
<reference key="1">
    <citation type="submission" date="2007-08" db="EMBL/GenBank/DDBJ databases">
        <title>Complete sequence of Shewanella sediminis HAW-EB3.</title>
        <authorList>
            <consortium name="US DOE Joint Genome Institute"/>
            <person name="Copeland A."/>
            <person name="Lucas S."/>
            <person name="Lapidus A."/>
            <person name="Barry K."/>
            <person name="Glavina del Rio T."/>
            <person name="Dalin E."/>
            <person name="Tice H."/>
            <person name="Pitluck S."/>
            <person name="Chertkov O."/>
            <person name="Brettin T."/>
            <person name="Bruce D."/>
            <person name="Detter J.C."/>
            <person name="Han C."/>
            <person name="Schmutz J."/>
            <person name="Larimer F."/>
            <person name="Land M."/>
            <person name="Hauser L."/>
            <person name="Kyrpides N."/>
            <person name="Kim E."/>
            <person name="Zhao J.-S."/>
            <person name="Richardson P."/>
        </authorList>
    </citation>
    <scope>NUCLEOTIDE SEQUENCE [LARGE SCALE GENOMIC DNA]</scope>
    <source>
        <strain>HAW-EB3</strain>
    </source>
</reference>
<proteinExistence type="inferred from homology"/>
<organism>
    <name type="scientific">Shewanella sediminis (strain HAW-EB3)</name>
    <dbReference type="NCBI Taxonomy" id="425104"/>
    <lineage>
        <taxon>Bacteria</taxon>
        <taxon>Pseudomonadati</taxon>
        <taxon>Pseudomonadota</taxon>
        <taxon>Gammaproteobacteria</taxon>
        <taxon>Alteromonadales</taxon>
        <taxon>Shewanellaceae</taxon>
        <taxon>Shewanella</taxon>
    </lineage>
</organism>
<sequence>MNTSQDTIYAQAYENISDFQFDEKVAGVFNDMIRRSVPGYGQIINTLGDFANQYVTTDSNIYDLGCSLGAATLSIRRHIDNRNCKIIAVDNSESMIQRCRENLSAYVSETPVDLVCGDIRDIKIENASMVVLNFTMQFLAPKDRDSLLSNIYKGLRPGGILVLSEKLNFEDESIQSLLVDLHLDFKRANGYSELEISQKRSSLEHVMKPDTLEQHGARLKKQGFKHFNVWFQCFNFASMVAIK</sequence>
<name>CMOA_SHESH</name>
<gene>
    <name evidence="1" type="primary">cmoA</name>
    <name type="ordered locus">Ssed_2028</name>
</gene>
<protein>
    <recommendedName>
        <fullName evidence="1">Carboxy-S-adenosyl-L-methionine synthase</fullName>
        <shortName evidence="1">Cx-SAM synthase</shortName>
        <ecNumber evidence="1">2.1.3.-</ecNumber>
    </recommendedName>
</protein>
<dbReference type="EC" id="2.1.3.-" evidence="1"/>
<dbReference type="EMBL" id="CP000821">
    <property type="protein sequence ID" value="ABV36637.1"/>
    <property type="molecule type" value="Genomic_DNA"/>
</dbReference>
<dbReference type="RefSeq" id="WP_012142372.1">
    <property type="nucleotide sequence ID" value="NC_009831.1"/>
</dbReference>
<dbReference type="SMR" id="A8FUW4"/>
<dbReference type="STRING" id="425104.Ssed_2028"/>
<dbReference type="KEGG" id="sse:Ssed_2028"/>
<dbReference type="eggNOG" id="COG2226">
    <property type="taxonomic scope" value="Bacteria"/>
</dbReference>
<dbReference type="HOGENOM" id="CLU_078475_0_0_6"/>
<dbReference type="OrthoDB" id="9779941at2"/>
<dbReference type="Proteomes" id="UP000002015">
    <property type="component" value="Chromosome"/>
</dbReference>
<dbReference type="GO" id="GO:0016743">
    <property type="term" value="F:carboxyl- or carbamoyltransferase activity"/>
    <property type="evidence" value="ECO:0007669"/>
    <property type="project" value="UniProtKB-UniRule"/>
</dbReference>
<dbReference type="GO" id="GO:1904047">
    <property type="term" value="F:S-adenosyl-L-methionine binding"/>
    <property type="evidence" value="ECO:0007669"/>
    <property type="project" value="UniProtKB-UniRule"/>
</dbReference>
<dbReference type="GO" id="GO:0002098">
    <property type="term" value="P:tRNA wobble uridine modification"/>
    <property type="evidence" value="ECO:0007669"/>
    <property type="project" value="InterPro"/>
</dbReference>
<dbReference type="CDD" id="cd02440">
    <property type="entry name" value="AdoMet_MTases"/>
    <property type="match status" value="1"/>
</dbReference>
<dbReference type="Gene3D" id="3.40.50.150">
    <property type="entry name" value="Vaccinia Virus protein VP39"/>
    <property type="match status" value="1"/>
</dbReference>
<dbReference type="HAMAP" id="MF_01589">
    <property type="entry name" value="Cx_SAM_synthase"/>
    <property type="match status" value="1"/>
</dbReference>
<dbReference type="InterPro" id="IPR005271">
    <property type="entry name" value="CmoA"/>
</dbReference>
<dbReference type="InterPro" id="IPR041698">
    <property type="entry name" value="Methyltransf_25"/>
</dbReference>
<dbReference type="InterPro" id="IPR029063">
    <property type="entry name" value="SAM-dependent_MTases_sf"/>
</dbReference>
<dbReference type="NCBIfam" id="TIGR00740">
    <property type="entry name" value="carboxy-S-adenosyl-L-methionine synthase CmoA"/>
    <property type="match status" value="1"/>
</dbReference>
<dbReference type="NCBIfam" id="NF011995">
    <property type="entry name" value="PRK15451.1"/>
    <property type="match status" value="1"/>
</dbReference>
<dbReference type="PANTHER" id="PTHR43861:SF2">
    <property type="entry name" value="CARBOXY-S-ADENOSYL-L-METHIONINE SYNTHASE"/>
    <property type="match status" value="1"/>
</dbReference>
<dbReference type="PANTHER" id="PTHR43861">
    <property type="entry name" value="TRANS-ACONITATE 2-METHYLTRANSFERASE-RELATED"/>
    <property type="match status" value="1"/>
</dbReference>
<dbReference type="Pfam" id="PF13649">
    <property type="entry name" value="Methyltransf_25"/>
    <property type="match status" value="1"/>
</dbReference>
<dbReference type="PIRSF" id="PIRSF006325">
    <property type="entry name" value="MeTrfase_bac"/>
    <property type="match status" value="1"/>
</dbReference>
<dbReference type="SUPFAM" id="SSF53335">
    <property type="entry name" value="S-adenosyl-L-methionine-dependent methyltransferases"/>
    <property type="match status" value="1"/>
</dbReference>